<proteinExistence type="inferred from homology"/>
<accession>Q7WNY6</accession>
<name>LOLB_BORBR</name>
<sequence>MSACPAPRSPFRWLHAFTLCLLLAVLAGCVSVPKPMAGAGEDVFSRVGRFAITVTESDGKQQAVQGGFAWRDDGGSYLLDLTNPLGSTEARVEGRPGMAVLTRANGERLAAEHPDALAEDALGSPVPVTGLRDWLRGRLMAGAAPDGLERDAQGRPTAFEQDGWNARLSRYDAQGPQLLVLQRQEPGRRILVRLVITQP</sequence>
<comment type="function">
    <text evidence="1">Plays a critical role in the incorporation of lipoproteins in the outer membrane after they are released by the LolA protein.</text>
</comment>
<comment type="subunit">
    <text evidence="1">Monomer.</text>
</comment>
<comment type="subcellular location">
    <subcellularLocation>
        <location evidence="1">Cell outer membrane</location>
        <topology evidence="1">Lipid-anchor</topology>
    </subcellularLocation>
</comment>
<comment type="similarity">
    <text evidence="1">Belongs to the LolB family.</text>
</comment>
<reference key="1">
    <citation type="journal article" date="2003" name="Nat. Genet.">
        <title>Comparative analysis of the genome sequences of Bordetella pertussis, Bordetella parapertussis and Bordetella bronchiseptica.</title>
        <authorList>
            <person name="Parkhill J."/>
            <person name="Sebaihia M."/>
            <person name="Preston A."/>
            <person name="Murphy L.D."/>
            <person name="Thomson N.R."/>
            <person name="Harris D.E."/>
            <person name="Holden M.T.G."/>
            <person name="Churcher C.M."/>
            <person name="Bentley S.D."/>
            <person name="Mungall K.L."/>
            <person name="Cerdeno-Tarraga A.-M."/>
            <person name="Temple L."/>
            <person name="James K.D."/>
            <person name="Harris B."/>
            <person name="Quail M.A."/>
            <person name="Achtman M."/>
            <person name="Atkin R."/>
            <person name="Baker S."/>
            <person name="Basham D."/>
            <person name="Bason N."/>
            <person name="Cherevach I."/>
            <person name="Chillingworth T."/>
            <person name="Collins M."/>
            <person name="Cronin A."/>
            <person name="Davis P."/>
            <person name="Doggett J."/>
            <person name="Feltwell T."/>
            <person name="Goble A."/>
            <person name="Hamlin N."/>
            <person name="Hauser H."/>
            <person name="Holroyd S."/>
            <person name="Jagels K."/>
            <person name="Leather S."/>
            <person name="Moule S."/>
            <person name="Norberczak H."/>
            <person name="O'Neil S."/>
            <person name="Ormond D."/>
            <person name="Price C."/>
            <person name="Rabbinowitsch E."/>
            <person name="Rutter S."/>
            <person name="Sanders M."/>
            <person name="Saunders D."/>
            <person name="Seeger K."/>
            <person name="Sharp S."/>
            <person name="Simmonds M."/>
            <person name="Skelton J."/>
            <person name="Squares R."/>
            <person name="Squares S."/>
            <person name="Stevens K."/>
            <person name="Unwin L."/>
            <person name="Whitehead S."/>
            <person name="Barrell B.G."/>
            <person name="Maskell D.J."/>
        </authorList>
    </citation>
    <scope>NUCLEOTIDE SEQUENCE [LARGE SCALE GENOMIC DNA]</scope>
    <source>
        <strain>ATCC BAA-588 / NCTC 13252 / RB50</strain>
    </source>
</reference>
<feature type="signal peptide" evidence="1">
    <location>
        <begin position="1"/>
        <end position="28"/>
    </location>
</feature>
<feature type="chain" id="PRO_0000018291" description="Outer-membrane lipoprotein LolB">
    <location>
        <begin position="29"/>
        <end position="199"/>
    </location>
</feature>
<feature type="lipid moiety-binding region" description="N-palmitoyl cysteine" evidence="1">
    <location>
        <position position="29"/>
    </location>
</feature>
<feature type="lipid moiety-binding region" description="S-diacylglycerol cysteine" evidence="1">
    <location>
        <position position="29"/>
    </location>
</feature>
<protein>
    <recommendedName>
        <fullName evidence="1">Outer-membrane lipoprotein LolB</fullName>
    </recommendedName>
</protein>
<keyword id="KW-0998">Cell outer membrane</keyword>
<keyword id="KW-0143">Chaperone</keyword>
<keyword id="KW-0449">Lipoprotein</keyword>
<keyword id="KW-0472">Membrane</keyword>
<keyword id="KW-0564">Palmitate</keyword>
<keyword id="KW-0653">Protein transport</keyword>
<keyword id="KW-0732">Signal</keyword>
<keyword id="KW-0813">Transport</keyword>
<gene>
    <name evidence="1" type="primary">lolB</name>
    <name type="ordered locus">BB0899</name>
</gene>
<organism>
    <name type="scientific">Bordetella bronchiseptica (strain ATCC BAA-588 / NCTC 13252 / RB50)</name>
    <name type="common">Alcaligenes bronchisepticus</name>
    <dbReference type="NCBI Taxonomy" id="257310"/>
    <lineage>
        <taxon>Bacteria</taxon>
        <taxon>Pseudomonadati</taxon>
        <taxon>Pseudomonadota</taxon>
        <taxon>Betaproteobacteria</taxon>
        <taxon>Burkholderiales</taxon>
        <taxon>Alcaligenaceae</taxon>
        <taxon>Bordetella</taxon>
    </lineage>
</organism>
<evidence type="ECO:0000255" key="1">
    <source>
        <dbReference type="HAMAP-Rule" id="MF_00233"/>
    </source>
</evidence>
<dbReference type="EMBL" id="BX640439">
    <property type="protein sequence ID" value="CAE31398.1"/>
    <property type="molecule type" value="Genomic_DNA"/>
</dbReference>
<dbReference type="RefSeq" id="WP_010925979.1">
    <property type="nucleotide sequence ID" value="NC_002927.3"/>
</dbReference>
<dbReference type="SMR" id="Q7WNY6"/>
<dbReference type="KEGG" id="bbr:BB0899"/>
<dbReference type="eggNOG" id="COG3017">
    <property type="taxonomic scope" value="Bacteria"/>
</dbReference>
<dbReference type="HOGENOM" id="CLU_092816_3_0_4"/>
<dbReference type="Proteomes" id="UP000001027">
    <property type="component" value="Chromosome"/>
</dbReference>
<dbReference type="GO" id="GO:0009279">
    <property type="term" value="C:cell outer membrane"/>
    <property type="evidence" value="ECO:0007669"/>
    <property type="project" value="UniProtKB-SubCell"/>
</dbReference>
<dbReference type="GO" id="GO:0044874">
    <property type="term" value="P:lipoprotein localization to outer membrane"/>
    <property type="evidence" value="ECO:0007669"/>
    <property type="project" value="UniProtKB-UniRule"/>
</dbReference>
<dbReference type="GO" id="GO:0015031">
    <property type="term" value="P:protein transport"/>
    <property type="evidence" value="ECO:0007669"/>
    <property type="project" value="UniProtKB-KW"/>
</dbReference>
<dbReference type="CDD" id="cd16326">
    <property type="entry name" value="LolB"/>
    <property type="match status" value="1"/>
</dbReference>
<dbReference type="Gene3D" id="2.50.20.10">
    <property type="entry name" value="Lipoprotein localisation LolA/LolB/LppX"/>
    <property type="match status" value="1"/>
</dbReference>
<dbReference type="HAMAP" id="MF_00233">
    <property type="entry name" value="LolB"/>
    <property type="match status" value="1"/>
</dbReference>
<dbReference type="InterPro" id="IPR029046">
    <property type="entry name" value="LolA/LolB/LppX"/>
</dbReference>
<dbReference type="InterPro" id="IPR004565">
    <property type="entry name" value="OM_lipoprot_LolB"/>
</dbReference>
<dbReference type="NCBIfam" id="TIGR00548">
    <property type="entry name" value="lolB"/>
    <property type="match status" value="1"/>
</dbReference>
<dbReference type="Pfam" id="PF03550">
    <property type="entry name" value="LolB"/>
    <property type="match status" value="1"/>
</dbReference>
<dbReference type="SUPFAM" id="SSF89392">
    <property type="entry name" value="Prokaryotic lipoproteins and lipoprotein localization factors"/>
    <property type="match status" value="1"/>
</dbReference>